<sequence length="40" mass="4695">MKVRNSLRSLKNKPGAQVVRRRGKVYVINKKEPRFKARQG</sequence>
<dbReference type="EMBL" id="AP009044">
    <property type="protein sequence ID" value="BAF55450.1"/>
    <property type="molecule type" value="Genomic_DNA"/>
</dbReference>
<dbReference type="RefSeq" id="WP_003857945.1">
    <property type="nucleotide sequence ID" value="NC_009342.1"/>
</dbReference>
<dbReference type="SMR" id="A4QGT4"/>
<dbReference type="GeneID" id="18194970"/>
<dbReference type="KEGG" id="cgt:cgR_2440"/>
<dbReference type="HOGENOM" id="CLU_135723_3_1_11"/>
<dbReference type="PhylomeDB" id="A4QGT4"/>
<dbReference type="Proteomes" id="UP000006698">
    <property type="component" value="Chromosome"/>
</dbReference>
<dbReference type="GO" id="GO:1990904">
    <property type="term" value="C:ribonucleoprotein complex"/>
    <property type="evidence" value="ECO:0007669"/>
    <property type="project" value="UniProtKB-KW"/>
</dbReference>
<dbReference type="GO" id="GO:0005840">
    <property type="term" value="C:ribosome"/>
    <property type="evidence" value="ECO:0007669"/>
    <property type="project" value="UniProtKB-KW"/>
</dbReference>
<dbReference type="GO" id="GO:0003735">
    <property type="term" value="F:structural constituent of ribosome"/>
    <property type="evidence" value="ECO:0007669"/>
    <property type="project" value="InterPro"/>
</dbReference>
<dbReference type="GO" id="GO:0006412">
    <property type="term" value="P:translation"/>
    <property type="evidence" value="ECO:0007669"/>
    <property type="project" value="UniProtKB-UniRule"/>
</dbReference>
<dbReference type="HAMAP" id="MF_00251">
    <property type="entry name" value="Ribosomal_bL36"/>
    <property type="match status" value="1"/>
</dbReference>
<dbReference type="InterPro" id="IPR000473">
    <property type="entry name" value="Ribosomal_bL36"/>
</dbReference>
<dbReference type="InterPro" id="IPR035977">
    <property type="entry name" value="Ribosomal_bL36_sp"/>
</dbReference>
<dbReference type="InterPro" id="IPR047621">
    <property type="entry name" value="Ribosomal_L36_bact"/>
</dbReference>
<dbReference type="NCBIfam" id="NF002021">
    <property type="entry name" value="PRK00831.1"/>
    <property type="match status" value="1"/>
</dbReference>
<dbReference type="NCBIfam" id="TIGR01022">
    <property type="entry name" value="rpmJ_bact"/>
    <property type="match status" value="1"/>
</dbReference>
<dbReference type="PANTHER" id="PTHR47781">
    <property type="entry name" value="50S RIBOSOMAL PROTEIN L36 2"/>
    <property type="match status" value="1"/>
</dbReference>
<dbReference type="PANTHER" id="PTHR47781:SF1">
    <property type="entry name" value="LARGE RIBOSOMAL SUBUNIT PROTEIN BL36B"/>
    <property type="match status" value="1"/>
</dbReference>
<dbReference type="Pfam" id="PF00444">
    <property type="entry name" value="Ribosomal_L36"/>
    <property type="match status" value="1"/>
</dbReference>
<dbReference type="SUPFAM" id="SSF57840">
    <property type="entry name" value="Ribosomal protein L36"/>
    <property type="match status" value="1"/>
</dbReference>
<organism>
    <name type="scientific">Corynebacterium glutamicum (strain R)</name>
    <dbReference type="NCBI Taxonomy" id="340322"/>
    <lineage>
        <taxon>Bacteria</taxon>
        <taxon>Bacillati</taxon>
        <taxon>Actinomycetota</taxon>
        <taxon>Actinomycetes</taxon>
        <taxon>Mycobacteriales</taxon>
        <taxon>Corynebacteriaceae</taxon>
        <taxon>Corynebacterium</taxon>
    </lineage>
</organism>
<feature type="chain" id="PRO_0000302189" description="Large ribosomal subunit protein bL36">
    <location>
        <begin position="1"/>
        <end position="40"/>
    </location>
</feature>
<protein>
    <recommendedName>
        <fullName evidence="1">Large ribosomal subunit protein bL36</fullName>
    </recommendedName>
    <alternativeName>
        <fullName evidence="2">50S ribosomal protein L36</fullName>
    </alternativeName>
</protein>
<accession>A4QGT4</accession>
<gene>
    <name evidence="1" type="primary">rpmJ</name>
    <name type="ordered locus">cgR_2440</name>
</gene>
<keyword id="KW-0687">Ribonucleoprotein</keyword>
<keyword id="KW-0689">Ribosomal protein</keyword>
<proteinExistence type="inferred from homology"/>
<evidence type="ECO:0000255" key="1">
    <source>
        <dbReference type="HAMAP-Rule" id="MF_00251"/>
    </source>
</evidence>
<evidence type="ECO:0000305" key="2"/>
<reference key="1">
    <citation type="journal article" date="2007" name="Microbiology">
        <title>Comparative analysis of the Corynebacterium glutamicum group and complete genome sequence of strain R.</title>
        <authorList>
            <person name="Yukawa H."/>
            <person name="Omumasaba C.A."/>
            <person name="Nonaka H."/>
            <person name="Kos P."/>
            <person name="Okai N."/>
            <person name="Suzuki N."/>
            <person name="Suda M."/>
            <person name="Tsuge Y."/>
            <person name="Watanabe J."/>
            <person name="Ikeda Y."/>
            <person name="Vertes A.A."/>
            <person name="Inui M."/>
        </authorList>
    </citation>
    <scope>NUCLEOTIDE SEQUENCE [LARGE SCALE GENOMIC DNA]</scope>
    <source>
        <strain>R</strain>
    </source>
</reference>
<comment type="similarity">
    <text evidence="1">Belongs to the bacterial ribosomal protein bL36 family.</text>
</comment>
<name>RL36_CORGB</name>